<evidence type="ECO:0000256" key="1">
    <source>
        <dbReference type="SAM" id="MobiDB-lite"/>
    </source>
</evidence>
<evidence type="ECO:0000269" key="2">
    <source>
    </source>
</evidence>
<evidence type="ECO:0000269" key="3">
    <source>
    </source>
</evidence>
<evidence type="ECO:0000269" key="4">
    <source>
    </source>
</evidence>
<evidence type="ECO:0000269" key="5">
    <source>
    </source>
</evidence>
<evidence type="ECO:0000269" key="6">
    <source>
    </source>
</evidence>
<evidence type="ECO:0000269" key="7">
    <source>
    </source>
</evidence>
<evidence type="ECO:0000305" key="8"/>
<evidence type="ECO:0007829" key="9">
    <source>
        <dbReference type="PDB" id="1RM1"/>
    </source>
</evidence>
<evidence type="ECO:0007829" key="10">
    <source>
        <dbReference type="PDB" id="1YTB"/>
    </source>
</evidence>
<reference key="1">
    <citation type="journal article" date="1989" name="Cell">
        <title>Isolation of the gene encoding the yeast TATA binding protein TFIID: a gene identical to the SPT15 suppressor of Ty element insertions.</title>
        <authorList>
            <person name="Hahn S."/>
            <person name="Buratowski S."/>
            <person name="Sharp P.A."/>
            <person name="Guarente L."/>
        </authorList>
    </citation>
    <scope>NUCLEOTIDE SEQUENCE [GENOMIC DNA]</scope>
</reference>
<reference key="2">
    <citation type="journal article" date="1989" name="Cell">
        <title>SPT15, the gene encoding the yeast TATA binding factor TFIID, is required for normal transcription initiation in vivo.</title>
        <authorList>
            <person name="Eisenmann D.M."/>
            <person name="Dollard C."/>
            <person name="Winston F."/>
        </authorList>
    </citation>
    <scope>NUCLEOTIDE SEQUENCE [GENOMIC DNA]</scope>
</reference>
<reference key="3">
    <citation type="journal article" date="1989" name="Nature">
        <title>Cloning and structure of a yeast gene encoding a general transcription initiation factor TFIID that binds to the TATA box.</title>
        <authorList>
            <person name="Horikoshi M."/>
            <person name="Wang C.K."/>
            <person name="Fujii H."/>
            <person name="Cromlish J.A."/>
            <person name="Weil P.A."/>
            <person name="Roeder R.G."/>
        </authorList>
    </citation>
    <scope>NUCLEOTIDE SEQUENCE [GENOMIC DNA]</scope>
    <scope>PARTIAL PROTEIN SEQUENCE OF 2-34; 122-162 AND 198-233</scope>
    <scope>CLEAVAGE OF INITIATOR METHIONINE</scope>
</reference>
<reference key="4">
    <citation type="journal article" date="1989" name="Proc. Natl. Acad. Sci. U.S.A.">
        <title>Yeast TATA-box transcription factor gene.</title>
        <authorList>
            <person name="Schmidt M.C."/>
            <person name="Kao C."/>
            <person name="Pei R."/>
            <person name="Berk A.J."/>
        </authorList>
    </citation>
    <scope>NUCLEOTIDE SEQUENCE [GENOMIC DNA]</scope>
</reference>
<reference key="5">
    <citation type="journal article" date="1989" name="Proc. Natl. Acad. Sci. U.S.A.">
        <title>Cloning of the gene encoding the yeast protein BTF1Y, which can substitute for the human TATA box-binding factor.</title>
        <authorList>
            <person name="Cavallini B."/>
            <person name="Faus I."/>
            <person name="Matthes H."/>
            <person name="Chipoulet J.M."/>
            <person name="Winsor B."/>
            <person name="Egly J.-M."/>
            <person name="Chambon P."/>
        </authorList>
    </citation>
    <scope>NUCLEOTIDE SEQUENCE [GENOMIC DNA]</scope>
</reference>
<reference key="6">
    <citation type="journal article" date="1997" name="Nature">
        <title>The nucleotide sequence of Saccharomyces cerevisiae chromosome V.</title>
        <authorList>
            <person name="Dietrich F.S."/>
            <person name="Mulligan J.T."/>
            <person name="Hennessy K.M."/>
            <person name="Yelton M.A."/>
            <person name="Allen E."/>
            <person name="Araujo R."/>
            <person name="Aviles E."/>
            <person name="Berno A."/>
            <person name="Brennan T."/>
            <person name="Carpenter J."/>
            <person name="Chen E."/>
            <person name="Cherry J.M."/>
            <person name="Chung E."/>
            <person name="Duncan M."/>
            <person name="Guzman E."/>
            <person name="Hartzell G."/>
            <person name="Hunicke-Smith S."/>
            <person name="Hyman R.W."/>
            <person name="Kayser A."/>
            <person name="Komp C."/>
            <person name="Lashkari D."/>
            <person name="Lew H."/>
            <person name="Lin D."/>
            <person name="Mosedale D."/>
            <person name="Nakahara K."/>
            <person name="Namath A."/>
            <person name="Norgren R."/>
            <person name="Oefner P."/>
            <person name="Oh C."/>
            <person name="Petel F.X."/>
            <person name="Roberts D."/>
            <person name="Sehl P."/>
            <person name="Schramm S."/>
            <person name="Shogren T."/>
            <person name="Smith V."/>
            <person name="Taylor P."/>
            <person name="Wei Y."/>
            <person name="Botstein D."/>
            <person name="Davis R.W."/>
        </authorList>
    </citation>
    <scope>NUCLEOTIDE SEQUENCE [LARGE SCALE GENOMIC DNA]</scope>
    <source>
        <strain>ATCC 204508 / S288c</strain>
    </source>
</reference>
<reference key="7">
    <citation type="journal article" date="2014" name="G3 (Bethesda)">
        <title>The reference genome sequence of Saccharomyces cerevisiae: Then and now.</title>
        <authorList>
            <person name="Engel S.R."/>
            <person name="Dietrich F.S."/>
            <person name="Fisk D.G."/>
            <person name="Binkley G."/>
            <person name="Balakrishnan R."/>
            <person name="Costanzo M.C."/>
            <person name="Dwight S.S."/>
            <person name="Hitz B.C."/>
            <person name="Karra K."/>
            <person name="Nash R.S."/>
            <person name="Weng S."/>
            <person name="Wong E.D."/>
            <person name="Lloyd P."/>
            <person name="Skrzypek M.S."/>
            <person name="Miyasato S.R."/>
            <person name="Simison M."/>
            <person name="Cherry J.M."/>
        </authorList>
    </citation>
    <scope>GENOME REANNOTATION</scope>
    <source>
        <strain>ATCC 204508 / S288c</strain>
    </source>
</reference>
<reference key="8">
    <citation type="journal article" date="1990" name="Nature">
        <title>Cryptic initiation sequence revealed.</title>
        <authorList>
            <person name="Hoeijmakers J.H.J."/>
        </authorList>
    </citation>
    <scope>REPEAT IN SEQUENCE</scope>
</reference>
<reference key="9">
    <citation type="journal article" date="1990" name="Nature">
        <title>Cryptic initiation sequence revealed.</title>
        <authorList>
            <person name="Nagai K."/>
        </authorList>
    </citation>
    <scope>REPEAT IN SEQUENCE</scope>
</reference>
<reference key="10">
    <citation type="journal article" date="1998" name="Microbiol. Mol. Biol. Rev.">
        <title>Molecular genetics of the RNA polymerase II general transcriptional machinery.</title>
        <authorList>
            <person name="Hampsey M."/>
        </authorList>
    </citation>
    <scope>FUNCTION</scope>
</reference>
<reference key="11">
    <citation type="journal article" date="2002" name="Mol. Cell. Biol.">
        <title>Molecular characterization of Saccharomyces cerevisiae TFIID.</title>
        <authorList>
            <person name="Sanders S.L."/>
            <person name="Garbett K.A."/>
            <person name="Weil P.A."/>
        </authorList>
    </citation>
    <scope>FUNCTION</scope>
    <scope>TFIID STOICHIOMETRY</scope>
</reference>
<reference key="12">
    <citation type="journal article" date="2002" name="Plant Mol. Biol.">
        <title>Multi-protein complexes in eukaryotic gene transcription.</title>
        <authorList>
            <person name="Martinez E."/>
        </authorList>
    </citation>
    <scope>FUNCTION</scope>
</reference>
<reference key="13">
    <citation type="journal article" date="2006" name="Mol. Cell">
        <title>Structure of the tau60/Delta tau91 subcomplex of yeast transcription factor IIIC: insights into preinitiation complex assembly.</title>
        <authorList>
            <person name="Mylona A."/>
            <person name="Fernandez-Tornero C."/>
            <person name="Legrand P."/>
            <person name="Haupt M."/>
            <person name="Sentenac A."/>
            <person name="Acker J."/>
            <person name="Mueller C.W."/>
        </authorList>
    </citation>
    <scope>INTERACTION WITH TFC8</scope>
</reference>
<reference key="14">
    <citation type="journal article" date="2008" name="Mol. Cell. Proteomics">
        <title>A multidimensional chromatography technology for in-depth phosphoproteome analysis.</title>
        <authorList>
            <person name="Albuquerque C.P."/>
            <person name="Smolka M.B."/>
            <person name="Payne S.H."/>
            <person name="Bafna V."/>
            <person name="Eng J."/>
            <person name="Zhou H."/>
        </authorList>
    </citation>
    <scope>IDENTIFICATION BY MASS SPECTROMETRY [LARGE SCALE ANALYSIS]</scope>
</reference>
<reference key="15">
    <citation type="journal article" date="1993" name="Nature">
        <title>Crystal structure of a yeast TBP/TATA-box complex.</title>
        <authorList>
            <person name="Kim Y."/>
            <person name="Geiger J.H."/>
            <person name="Hahn S."/>
            <person name="Sigler P.B."/>
        </authorList>
    </citation>
    <scope>X-RAY CRYSTALLOGRAPHY (1.8 ANGSTROMS) OF 61-240</scope>
</reference>
<reference key="16">
    <citation type="journal article" date="1993" name="Proc. Natl. Acad. Sci. U.S.A.">
        <title>Crystal structure of yeast TATA-binding protein and model for interaction with DNA.</title>
        <authorList>
            <person name="Chasman D.I."/>
            <person name="Flaherty K.M."/>
            <person name="Sharp P.A."/>
            <person name="Kornberg R.D."/>
        </authorList>
    </citation>
    <scope>X-RAY CRYSTALLOGRAPHY (2.6 ANGSTROMS) OF 61-240</scope>
</reference>
<reference key="17">
    <citation type="journal article" date="1996" name="Nature">
        <title>Crystal structure of a yeast TFIIA/TBP/DNA complex.</title>
        <authorList>
            <person name="Tan S."/>
            <person name="Hunziker Y."/>
            <person name="Sargent D.F."/>
            <person name="Richmond T.J."/>
        </authorList>
    </citation>
    <scope>X-RAY CRYSTALLOGRAPHY (2.5 ANGSTROMS) OF 61-240</scope>
</reference>
<reference key="18">
    <citation type="journal article" date="1998" name="Cell">
        <title>Solution structure of a TBP-TAF(II)230 complex: protein mimicry of the minor groove surface of the TATA box unwound by TBP.</title>
        <authorList>
            <person name="Liu D."/>
            <person name="Ishima R."/>
            <person name="Tong K.I."/>
            <person name="Bagby S."/>
            <person name="Kokubo T."/>
            <person name="Muhandiram D.R."/>
            <person name="Kay L.E."/>
            <person name="Nakatani Y."/>
            <person name="Ikura M."/>
        </authorList>
    </citation>
    <scope>STRUCTURE BY NMR OF 61-240</scope>
</reference>
<reference key="19">
    <citation type="journal article" date="2002" name="EMBO J.">
        <title>Mapping histone fold TAFs within yeast TFIID.</title>
        <authorList>
            <person name="Leurent C."/>
            <person name="Sanders S.L."/>
            <person name="Ruhlmann C."/>
            <person name="Mallouh V."/>
            <person name="Weil P.A."/>
            <person name="Kirschner D.B."/>
            <person name="Tora L."/>
            <person name="Schultz P."/>
        </authorList>
    </citation>
    <scope>3D-STRUCTURE</scope>
    <scope>ELECTRON MICROSCOPY OF TFIID</scope>
</reference>
<reference key="20">
    <citation type="journal article" date="2003" name="Nature">
        <title>Crystal structure of a transcription factor IIIB core interface ternary complex.</title>
        <authorList>
            <person name="Juo Z.S."/>
            <person name="Kassavetis G.A."/>
            <person name="Wang J."/>
            <person name="Geiduschek E.P."/>
            <person name="Sigler P.B."/>
        </authorList>
    </citation>
    <scope>X-RAY CRYSTALLOGRAPHY (2.95 ANGSTROMS) OF 61-240 IN COMPLEX WITH BRF1</scope>
</reference>
<accession>P13393</accession>
<accession>D3DM55</accession>
<name>TBP_YEAST</name>
<keyword id="KW-0002">3D-structure</keyword>
<keyword id="KW-0903">Direct protein sequencing</keyword>
<keyword id="KW-0238">DNA-binding</keyword>
<keyword id="KW-0539">Nucleus</keyword>
<keyword id="KW-1185">Reference proteome</keyword>
<keyword id="KW-0677">Repeat</keyword>
<keyword id="KW-0804">Transcription</keyword>
<protein>
    <recommendedName>
        <fullName>TATA-box-binding protein</fullName>
    </recommendedName>
    <alternativeName>
        <fullName>TATA sequence-binding protein</fullName>
        <shortName>TBP</shortName>
    </alternativeName>
    <alternativeName>
        <fullName>TATA-binding factor</fullName>
    </alternativeName>
    <alternativeName>
        <fullName>TATA-box factor</fullName>
    </alternativeName>
    <alternativeName>
        <fullName>Transcription factor D</fullName>
    </alternativeName>
    <alternativeName>
        <fullName>Transcription initiation factor TFIID TBP subunit</fullName>
    </alternativeName>
</protein>
<feature type="initiator methionine" description="Removed" evidence="6">
    <location>
        <position position="1"/>
    </location>
</feature>
<feature type="chain" id="PRO_0000153990" description="TATA-box-binding protein">
    <location>
        <begin position="2"/>
        <end position="240"/>
    </location>
</feature>
<feature type="repeat" description="1">
    <location>
        <begin position="67"/>
        <end position="143"/>
    </location>
</feature>
<feature type="repeat" description="2">
    <location>
        <begin position="157"/>
        <end position="234"/>
    </location>
</feature>
<feature type="region of interest" description="Disordered" evidence="1">
    <location>
        <begin position="21"/>
        <end position="61"/>
    </location>
</feature>
<feature type="compositionally biased region" description="Basic and acidic residues" evidence="1">
    <location>
        <begin position="44"/>
        <end position="57"/>
    </location>
</feature>
<feature type="sequence conflict" description="In Ref. 4; AAA35146." evidence="8" ref="4">
    <original>A</original>
    <variation>T</variation>
    <location>
        <position position="50"/>
    </location>
</feature>
<feature type="strand" evidence="10">
    <location>
        <begin position="66"/>
        <end position="75"/>
    </location>
</feature>
<feature type="helix" evidence="10">
    <location>
        <begin position="82"/>
        <end position="88"/>
    </location>
</feature>
<feature type="strand" evidence="10">
    <location>
        <begin position="89"/>
        <end position="93"/>
    </location>
</feature>
<feature type="turn" evidence="10">
    <location>
        <begin position="96"/>
        <end position="98"/>
    </location>
</feature>
<feature type="strand" evidence="10">
    <location>
        <begin position="100"/>
        <end position="106"/>
    </location>
</feature>
<feature type="turn" evidence="10">
    <location>
        <begin position="107"/>
        <end position="110"/>
    </location>
</feature>
<feature type="strand" evidence="10">
    <location>
        <begin position="111"/>
        <end position="115"/>
    </location>
</feature>
<feature type="strand" evidence="10">
    <location>
        <begin position="119"/>
        <end position="128"/>
    </location>
</feature>
<feature type="helix" evidence="10">
    <location>
        <begin position="129"/>
        <end position="146"/>
    </location>
</feature>
<feature type="strand" evidence="10">
    <location>
        <begin position="153"/>
        <end position="165"/>
    </location>
</feature>
<feature type="helix" evidence="10">
    <location>
        <begin position="172"/>
        <end position="178"/>
    </location>
</feature>
<feature type="turn" evidence="10">
    <location>
        <begin position="179"/>
        <end position="182"/>
    </location>
</feature>
<feature type="strand" evidence="9">
    <location>
        <begin position="183"/>
        <end position="186"/>
    </location>
</feature>
<feature type="turn" evidence="10">
    <location>
        <begin position="187"/>
        <end position="189"/>
    </location>
</feature>
<feature type="strand" evidence="10">
    <location>
        <begin position="191"/>
        <end position="196"/>
    </location>
</feature>
<feature type="strand" evidence="10">
    <location>
        <begin position="198"/>
        <end position="200"/>
    </location>
</feature>
<feature type="strand" evidence="10">
    <location>
        <begin position="203"/>
        <end position="206"/>
    </location>
</feature>
<feature type="strand" evidence="10">
    <location>
        <begin position="210"/>
        <end position="219"/>
    </location>
</feature>
<feature type="helix" evidence="10">
    <location>
        <begin position="220"/>
        <end position="236"/>
    </location>
</feature>
<dbReference type="EMBL" id="M27135">
    <property type="protein sequence ID" value="AAA35147.1"/>
    <property type="molecule type" value="Genomic_DNA"/>
</dbReference>
<dbReference type="EMBL" id="X16860">
    <property type="protein sequence ID" value="CAA34751.1"/>
    <property type="molecule type" value="Genomic_DNA"/>
</dbReference>
<dbReference type="EMBL" id="M26403">
    <property type="protein sequence ID" value="AAA35146.1"/>
    <property type="molecule type" value="Genomic_DNA"/>
</dbReference>
<dbReference type="EMBL" id="M29459">
    <property type="protein sequence ID" value="AAA34458.1"/>
    <property type="molecule type" value="Genomic_DNA"/>
</dbReference>
<dbReference type="EMBL" id="U18917">
    <property type="protein sequence ID" value="AAB64675.1"/>
    <property type="molecule type" value="Genomic_DNA"/>
</dbReference>
<dbReference type="EMBL" id="BK006939">
    <property type="protein sequence ID" value="DAA07809.1"/>
    <property type="molecule type" value="Genomic_DNA"/>
</dbReference>
<dbReference type="PIR" id="A30366">
    <property type="entry name" value="A30366"/>
</dbReference>
<dbReference type="RefSeq" id="NP_011075.3">
    <property type="nucleotide sequence ID" value="NM_001179038.3"/>
</dbReference>
<dbReference type="PDB" id="1NGM">
    <property type="method" value="X-ray"/>
    <property type="resolution" value="2.95 A"/>
    <property type="chains" value="A/E/I/M=61-240"/>
</dbReference>
<dbReference type="PDB" id="1NH2">
    <property type="method" value="X-ray"/>
    <property type="resolution" value="1.90 A"/>
    <property type="chains" value="A=61-240"/>
</dbReference>
<dbReference type="PDB" id="1RM1">
    <property type="method" value="X-ray"/>
    <property type="resolution" value="2.50 A"/>
    <property type="chains" value="A=1-240"/>
</dbReference>
<dbReference type="PDB" id="1TBA">
    <property type="method" value="NMR"/>
    <property type="chains" value="B=61-240"/>
</dbReference>
<dbReference type="PDB" id="1TBP">
    <property type="method" value="X-ray"/>
    <property type="resolution" value="2.60 A"/>
    <property type="chains" value="A/B=62-240"/>
</dbReference>
<dbReference type="PDB" id="1YTB">
    <property type="method" value="X-ray"/>
    <property type="resolution" value="1.80 A"/>
    <property type="chains" value="A/B=61-240"/>
</dbReference>
<dbReference type="PDB" id="1YTF">
    <property type="method" value="X-ray"/>
    <property type="resolution" value="2.50 A"/>
    <property type="chains" value="A=61-240"/>
</dbReference>
<dbReference type="PDB" id="4B0A">
    <property type="method" value="X-ray"/>
    <property type="resolution" value="1.97 A"/>
    <property type="chains" value="A=61-240"/>
</dbReference>
<dbReference type="PDB" id="4V1N">
    <property type="method" value="EM"/>
    <property type="resolution" value="7.80 A"/>
    <property type="chains" value="O=61-240"/>
</dbReference>
<dbReference type="PDB" id="4V1O">
    <property type="method" value="EM"/>
    <property type="resolution" value="9.70 A"/>
    <property type="chains" value="O=61-240"/>
</dbReference>
<dbReference type="PDB" id="5FMF">
    <property type="method" value="EM"/>
    <property type="resolution" value="6.00 A"/>
    <property type="chains" value="Q=61-240"/>
</dbReference>
<dbReference type="PDB" id="5FYW">
    <property type="method" value="EM"/>
    <property type="resolution" value="4.35 A"/>
    <property type="chains" value="O=1-240"/>
</dbReference>
<dbReference type="PDB" id="5FZ5">
    <property type="method" value="EM"/>
    <property type="resolution" value="8.80 A"/>
    <property type="chains" value="O=1-240"/>
</dbReference>
<dbReference type="PDB" id="5OQJ">
    <property type="method" value="EM"/>
    <property type="resolution" value="4.70 A"/>
    <property type="chains" value="O=1-240"/>
</dbReference>
<dbReference type="PDB" id="5OQM">
    <property type="method" value="EM"/>
    <property type="resolution" value="5.80 A"/>
    <property type="chains" value="O=1-240"/>
</dbReference>
<dbReference type="PDB" id="5SVA">
    <property type="method" value="EM"/>
    <property type="resolution" value="15.30 A"/>
    <property type="chains" value="j=1-240"/>
</dbReference>
<dbReference type="PDB" id="6CNB">
    <property type="method" value="EM"/>
    <property type="resolution" value="4.10 A"/>
    <property type="chains" value="R=61-240"/>
</dbReference>
<dbReference type="PDB" id="6CNC">
    <property type="method" value="EM"/>
    <property type="resolution" value="4.10 A"/>
    <property type="chains" value="R=61-240"/>
</dbReference>
<dbReference type="PDB" id="6CND">
    <property type="method" value="EM"/>
    <property type="resolution" value="4.80 A"/>
    <property type="chains" value="R=61-240"/>
</dbReference>
<dbReference type="PDB" id="6CNF">
    <property type="method" value="EM"/>
    <property type="resolution" value="4.50 A"/>
    <property type="chains" value="R=61-240"/>
</dbReference>
<dbReference type="PDB" id="6E16">
    <property type="method" value="X-ray"/>
    <property type="resolution" value="2.40 A"/>
    <property type="chains" value="A=61-240"/>
</dbReference>
<dbReference type="PDB" id="6E24">
    <property type="method" value="X-ray"/>
    <property type="resolution" value="3.00 A"/>
    <property type="chains" value="A=61-240"/>
</dbReference>
<dbReference type="PDB" id="6EU0">
    <property type="method" value="EM"/>
    <property type="resolution" value="4.00 A"/>
    <property type="chains" value="Y=1-240"/>
</dbReference>
<dbReference type="PDB" id="6F40">
    <property type="method" value="EM"/>
    <property type="resolution" value="3.70 A"/>
    <property type="chains" value="U=1-240"/>
</dbReference>
<dbReference type="PDB" id="6F41">
    <property type="method" value="EM"/>
    <property type="resolution" value="4.30 A"/>
    <property type="chains" value="U=1-240"/>
</dbReference>
<dbReference type="PDB" id="6F42">
    <property type="method" value="EM"/>
    <property type="resolution" value="5.50 A"/>
    <property type="chains" value="U=1-240"/>
</dbReference>
<dbReference type="PDB" id="6F44">
    <property type="method" value="EM"/>
    <property type="resolution" value="4.20 A"/>
    <property type="chains" value="U=1-240"/>
</dbReference>
<dbReference type="PDB" id="6GYK">
    <property type="method" value="EM"/>
    <property type="resolution" value="5.10 A"/>
    <property type="chains" value="O=1-240"/>
</dbReference>
<dbReference type="PDB" id="6GYL">
    <property type="method" value="EM"/>
    <property type="resolution" value="4.80 A"/>
    <property type="chains" value="O=1-240"/>
</dbReference>
<dbReference type="PDB" id="6GYM">
    <property type="method" value="EM"/>
    <property type="resolution" value="6.70 A"/>
    <property type="chains" value="O=1-240"/>
</dbReference>
<dbReference type="PDB" id="6TBM">
    <property type="method" value="EM"/>
    <property type="resolution" value="20.00 A"/>
    <property type="chains" value="M=1-240"/>
</dbReference>
<dbReference type="PDB" id="7ML0">
    <property type="method" value="EM"/>
    <property type="resolution" value="3.00 A"/>
    <property type="chains" value="O=1-240"/>
</dbReference>
<dbReference type="PDB" id="7ML1">
    <property type="method" value="EM"/>
    <property type="resolution" value="4.00 A"/>
    <property type="chains" value="O=1-240"/>
</dbReference>
<dbReference type="PDB" id="7ML2">
    <property type="method" value="EM"/>
    <property type="resolution" value="3.40 A"/>
    <property type="chains" value="O=1-240"/>
</dbReference>
<dbReference type="PDB" id="7ML4">
    <property type="method" value="EM"/>
    <property type="resolution" value="3.10 A"/>
    <property type="chains" value="O=1-240"/>
</dbReference>
<dbReference type="PDB" id="7O4I">
    <property type="method" value="EM"/>
    <property type="resolution" value="3.20 A"/>
    <property type="chains" value="O=1-240"/>
</dbReference>
<dbReference type="PDB" id="7O4J">
    <property type="method" value="EM"/>
    <property type="resolution" value="2.90 A"/>
    <property type="chains" value="O=1-240"/>
</dbReference>
<dbReference type="PDB" id="7O72">
    <property type="method" value="EM"/>
    <property type="resolution" value="3.40 A"/>
    <property type="chains" value="O=1-240"/>
</dbReference>
<dbReference type="PDB" id="7O73">
    <property type="method" value="EM"/>
    <property type="resolution" value="3.40 A"/>
    <property type="chains" value="O=1-240"/>
</dbReference>
<dbReference type="PDB" id="7O75">
    <property type="method" value="EM"/>
    <property type="resolution" value="3.20 A"/>
    <property type="chains" value="O=1-240"/>
</dbReference>
<dbReference type="PDB" id="7OH9">
    <property type="method" value="EM"/>
    <property type="resolution" value="3.00 A"/>
    <property type="chains" value="K=1-240"/>
</dbReference>
<dbReference type="PDB" id="7OHA">
    <property type="method" value="EM"/>
    <property type="resolution" value="2.90 A"/>
    <property type="chains" value="K=1-240"/>
</dbReference>
<dbReference type="PDB" id="7OHB">
    <property type="method" value="EM"/>
    <property type="resolution" value="3.40 A"/>
    <property type="chains" value="K=1-240"/>
</dbReference>
<dbReference type="PDB" id="7Q5B">
    <property type="method" value="EM"/>
    <property type="resolution" value="3.98 A"/>
    <property type="chains" value="Y=1-240"/>
</dbReference>
<dbReference type="PDB" id="7Z0O">
    <property type="method" value="EM"/>
    <property type="resolution" value="2.80 A"/>
    <property type="chains" value="H=1-240"/>
</dbReference>
<dbReference type="PDB" id="7ZS9">
    <property type="method" value="EM"/>
    <property type="resolution" value="3.10 A"/>
    <property type="chains" value="O=1-240"/>
</dbReference>
<dbReference type="PDB" id="7ZSA">
    <property type="method" value="EM"/>
    <property type="resolution" value="4.00 A"/>
    <property type="chains" value="O=1-240"/>
</dbReference>
<dbReference type="PDB" id="7ZSB">
    <property type="method" value="EM"/>
    <property type="resolution" value="6.60 A"/>
    <property type="chains" value="O=1-240"/>
</dbReference>
<dbReference type="PDB" id="8CEN">
    <property type="method" value="EM"/>
    <property type="resolution" value="3.00 A"/>
    <property type="chains" value="O=1-240"/>
</dbReference>
<dbReference type="PDB" id="8CEO">
    <property type="method" value="EM"/>
    <property type="resolution" value="3.60 A"/>
    <property type="chains" value="O=1-240"/>
</dbReference>
<dbReference type="PDB" id="8FFZ">
    <property type="method" value="EM"/>
    <property type="resolution" value="3.80 A"/>
    <property type="chains" value="H=61-240"/>
</dbReference>
<dbReference type="PDB" id="8H5B">
    <property type="method" value="EM"/>
    <property type="resolution" value="4.03 A"/>
    <property type="chains" value="B=61-240"/>
</dbReference>
<dbReference type="PDB" id="8UMH">
    <property type="method" value="EM"/>
    <property type="resolution" value="4.10 A"/>
    <property type="chains" value="O=1-240"/>
</dbReference>
<dbReference type="PDB" id="8UMI">
    <property type="method" value="EM"/>
    <property type="resolution" value="3.70 A"/>
    <property type="chains" value="O=1-240"/>
</dbReference>
<dbReference type="PDB" id="8UOQ">
    <property type="method" value="EM"/>
    <property type="resolution" value="3.80 A"/>
    <property type="chains" value="O=1-240"/>
</dbReference>
<dbReference type="PDB" id="8UOT">
    <property type="method" value="EM"/>
    <property type="resolution" value="3.70 A"/>
    <property type="chains" value="O=1-240"/>
</dbReference>
<dbReference type="PDBsum" id="1NGM"/>
<dbReference type="PDBsum" id="1NH2"/>
<dbReference type="PDBsum" id="1RM1"/>
<dbReference type="PDBsum" id="1TBA"/>
<dbReference type="PDBsum" id="1TBP"/>
<dbReference type="PDBsum" id="1YTB"/>
<dbReference type="PDBsum" id="1YTF"/>
<dbReference type="PDBsum" id="4B0A"/>
<dbReference type="PDBsum" id="4V1N"/>
<dbReference type="PDBsum" id="4V1O"/>
<dbReference type="PDBsum" id="5FMF"/>
<dbReference type="PDBsum" id="5FYW"/>
<dbReference type="PDBsum" id="5FZ5"/>
<dbReference type="PDBsum" id="5OQJ"/>
<dbReference type="PDBsum" id="5OQM"/>
<dbReference type="PDBsum" id="5SVA"/>
<dbReference type="PDBsum" id="6CNB"/>
<dbReference type="PDBsum" id="6CNC"/>
<dbReference type="PDBsum" id="6CND"/>
<dbReference type="PDBsum" id="6CNF"/>
<dbReference type="PDBsum" id="6E16"/>
<dbReference type="PDBsum" id="6E24"/>
<dbReference type="PDBsum" id="6EU0"/>
<dbReference type="PDBsum" id="6F40"/>
<dbReference type="PDBsum" id="6F41"/>
<dbReference type="PDBsum" id="6F42"/>
<dbReference type="PDBsum" id="6F44"/>
<dbReference type="PDBsum" id="6GYK"/>
<dbReference type="PDBsum" id="6GYL"/>
<dbReference type="PDBsum" id="6GYM"/>
<dbReference type="PDBsum" id="6TBM"/>
<dbReference type="PDBsum" id="7ML0"/>
<dbReference type="PDBsum" id="7ML1"/>
<dbReference type="PDBsum" id="7ML2"/>
<dbReference type="PDBsum" id="7ML4"/>
<dbReference type="PDBsum" id="7O4I"/>
<dbReference type="PDBsum" id="7O4J"/>
<dbReference type="PDBsum" id="7O72"/>
<dbReference type="PDBsum" id="7O73"/>
<dbReference type="PDBsum" id="7O75"/>
<dbReference type="PDBsum" id="7OH9"/>
<dbReference type="PDBsum" id="7OHA"/>
<dbReference type="PDBsum" id="7OHB"/>
<dbReference type="PDBsum" id="7Q5B"/>
<dbReference type="PDBsum" id="7Z0O"/>
<dbReference type="PDBsum" id="7ZS9"/>
<dbReference type="PDBsum" id="7ZSA"/>
<dbReference type="PDBsum" id="7ZSB"/>
<dbReference type="PDBsum" id="8CEN"/>
<dbReference type="PDBsum" id="8CEO"/>
<dbReference type="PDBsum" id="8FFZ"/>
<dbReference type="PDBsum" id="8H5B"/>
<dbReference type="PDBsum" id="8UMH"/>
<dbReference type="PDBsum" id="8UMI"/>
<dbReference type="PDBsum" id="8UOQ"/>
<dbReference type="PDBsum" id="8UOT"/>
<dbReference type="BMRB" id="P13393"/>
<dbReference type="EMDB" id="EMD-0090"/>
<dbReference type="EMDB" id="EMD-0091"/>
<dbReference type="EMDB" id="EMD-0092"/>
<dbReference type="EMDB" id="EMD-10446"/>
<dbReference type="EMDB" id="EMD-12719"/>
<dbReference type="EMDB" id="EMD-12720"/>
<dbReference type="EMDB" id="EMD-12743"/>
<dbReference type="EMDB" id="EMD-12744"/>
<dbReference type="EMDB" id="EMD-12745"/>
<dbReference type="EMDB" id="EMD-13831"/>
<dbReference type="EMDB" id="EMD-14428"/>
<dbReference type="EMDB" id="EMD-14927"/>
<dbReference type="EMDB" id="EMD-14928"/>
<dbReference type="EMDB" id="EMD-14929"/>
<dbReference type="EMDB" id="EMD-23904"/>
<dbReference type="EMDB" id="EMD-23905"/>
<dbReference type="EMDB" id="EMD-23908"/>
<dbReference type="EMDB" id="EMD-2785"/>
<dbReference type="EMDB" id="EMD-2786"/>
<dbReference type="EMDB" id="EMD-3378"/>
<dbReference type="EMDB" id="EMD-3383"/>
<dbReference type="EMDB" id="EMD-34490"/>
<dbReference type="EMDB" id="EMD-3846"/>
<dbReference type="EMDB" id="EMD-3850"/>
<dbReference type="EMDB" id="EMD-3955"/>
<dbReference type="EMDB" id="EMD-4180"/>
<dbReference type="EMDB" id="EMD-4181"/>
<dbReference type="EMDB" id="EMD-4182"/>
<dbReference type="EMDB" id="EMD-4183"/>
<dbReference type="EMDB" id="EMD-42379"/>
<dbReference type="EMDB" id="EMD-42380"/>
<dbReference type="EMDB" id="EMD-42437"/>
<dbReference type="EMDB" id="EMD-42438"/>
<dbReference type="EMDB" id="EMD-8305"/>
<dbReference type="SMR" id="P13393"/>
<dbReference type="BioGRID" id="36897">
    <property type="interactions" value="342"/>
</dbReference>
<dbReference type="ComplexPortal" id="CPX-1141">
    <property type="entry name" value="MOT1-TBP transcription regulation complex"/>
</dbReference>
<dbReference type="ComplexPortal" id="CPX-1143">
    <property type="entry name" value="General transcription factor TFIIIB complex"/>
</dbReference>
<dbReference type="ComplexPortal" id="CPX-1642">
    <property type="entry name" value="General transcription factor complex TFIID"/>
</dbReference>
<dbReference type="DIP" id="DIP-44N"/>
<dbReference type="FunCoup" id="P13393">
    <property type="interactions" value="1410"/>
</dbReference>
<dbReference type="IntAct" id="P13393">
    <property type="interactions" value="99"/>
</dbReference>
<dbReference type="MINT" id="P13393"/>
<dbReference type="STRING" id="4932.YER148W"/>
<dbReference type="iPTMnet" id="P13393"/>
<dbReference type="PaxDb" id="4932-YER148W"/>
<dbReference type="PeptideAtlas" id="P13393"/>
<dbReference type="EnsemblFungi" id="YER148W_mRNA">
    <property type="protein sequence ID" value="YER148W"/>
    <property type="gene ID" value="YER148W"/>
</dbReference>
<dbReference type="GeneID" id="856891"/>
<dbReference type="KEGG" id="sce:YER148W"/>
<dbReference type="AGR" id="SGD:S000000950"/>
<dbReference type="SGD" id="S000000950">
    <property type="gene designation" value="SPT15"/>
</dbReference>
<dbReference type="VEuPathDB" id="FungiDB:YER148W"/>
<dbReference type="eggNOG" id="KOG3302">
    <property type="taxonomic scope" value="Eukaryota"/>
</dbReference>
<dbReference type="GeneTree" id="ENSGT00940000159561"/>
<dbReference type="HOGENOM" id="CLU_060161_4_2_1"/>
<dbReference type="InParanoid" id="P13393"/>
<dbReference type="OMA" id="NCEYEPE"/>
<dbReference type="OrthoDB" id="2127950at2759"/>
<dbReference type="BioCyc" id="YEAST:G3O-30309-MONOMER"/>
<dbReference type="Reactome" id="R-SCE-674695">
    <property type="pathway name" value="RNA Polymerase II Pre-transcription Events"/>
</dbReference>
<dbReference type="Reactome" id="R-SCE-6807505">
    <property type="pathway name" value="RNA polymerase II transcribes snRNA genes"/>
</dbReference>
<dbReference type="Reactome" id="R-SCE-73772">
    <property type="pathway name" value="RNA Polymerase I Promoter Escape"/>
</dbReference>
<dbReference type="Reactome" id="R-SCE-73776">
    <property type="pathway name" value="RNA Polymerase II Promoter Escape"/>
</dbReference>
<dbReference type="Reactome" id="R-SCE-73779">
    <property type="pathway name" value="RNA Polymerase II Transcription Pre-Initiation And Promoter Opening"/>
</dbReference>
<dbReference type="Reactome" id="R-SCE-75953">
    <property type="pathway name" value="RNA Polymerase II Transcription Initiation"/>
</dbReference>
<dbReference type="Reactome" id="R-SCE-76042">
    <property type="pathway name" value="RNA Polymerase II Transcription Initiation And Promoter Clearance"/>
</dbReference>
<dbReference type="Reactome" id="R-SCE-76066">
    <property type="pathway name" value="RNA Polymerase III Transcription Initiation From Type 2 Promoter"/>
</dbReference>
<dbReference type="Reactome" id="R-SCE-9018519">
    <property type="pathway name" value="Estrogen-dependent gene expression"/>
</dbReference>
<dbReference type="BioGRID-ORCS" id="856891">
    <property type="hits" value="10 hits in 13 CRISPR screens"/>
</dbReference>
<dbReference type="EvolutionaryTrace" id="P13393"/>
<dbReference type="PRO" id="PR:P13393"/>
<dbReference type="Proteomes" id="UP000002311">
    <property type="component" value="Chromosome V"/>
</dbReference>
<dbReference type="RNAct" id="P13393">
    <property type="molecule type" value="protein"/>
</dbReference>
<dbReference type="GO" id="GO:0005654">
    <property type="term" value="C:nucleoplasm"/>
    <property type="evidence" value="ECO:0000304"/>
    <property type="project" value="Reactome"/>
</dbReference>
<dbReference type="GO" id="GO:0005634">
    <property type="term" value="C:nucleus"/>
    <property type="evidence" value="ECO:0000314"/>
    <property type="project" value="SGD"/>
</dbReference>
<dbReference type="GO" id="GO:0032991">
    <property type="term" value="C:protein-containing complex"/>
    <property type="evidence" value="ECO:0000315"/>
    <property type="project" value="CAFA"/>
</dbReference>
<dbReference type="GO" id="GO:0005672">
    <property type="term" value="C:transcription factor TFIIA complex"/>
    <property type="evidence" value="ECO:0000315"/>
    <property type="project" value="CAFA"/>
</dbReference>
<dbReference type="GO" id="GO:0005669">
    <property type="term" value="C:transcription factor TFIID complex"/>
    <property type="evidence" value="ECO:0000314"/>
    <property type="project" value="SGD"/>
</dbReference>
<dbReference type="GO" id="GO:0000126">
    <property type="term" value="C:transcription factor TFIIIB complex"/>
    <property type="evidence" value="ECO:0000314"/>
    <property type="project" value="SGD"/>
</dbReference>
<dbReference type="GO" id="GO:0005667">
    <property type="term" value="C:transcription regulator complex"/>
    <property type="evidence" value="ECO:0000353"/>
    <property type="project" value="ComplexPortal"/>
</dbReference>
<dbReference type="GO" id="GO:0003682">
    <property type="term" value="F:chromatin binding"/>
    <property type="evidence" value="ECO:0000314"/>
    <property type="project" value="SGD"/>
</dbReference>
<dbReference type="GO" id="GO:0097718">
    <property type="term" value="F:disordered domain specific binding"/>
    <property type="evidence" value="ECO:0000353"/>
    <property type="project" value="CAFA"/>
</dbReference>
<dbReference type="GO" id="GO:0008301">
    <property type="term" value="F:DNA binding, bending"/>
    <property type="evidence" value="ECO:0000314"/>
    <property type="project" value="SGD"/>
</dbReference>
<dbReference type="GO" id="GO:0140297">
    <property type="term" value="F:DNA-binding transcription factor binding"/>
    <property type="evidence" value="ECO:0000353"/>
    <property type="project" value="CAFA"/>
</dbReference>
<dbReference type="GO" id="GO:0001179">
    <property type="term" value="F:RNA polymerase I general transcription initiation factor binding"/>
    <property type="evidence" value="ECO:0000314"/>
    <property type="project" value="SGD"/>
</dbReference>
<dbReference type="GO" id="GO:0000979">
    <property type="term" value="F:RNA polymerase II core promoter sequence-specific DNA binding"/>
    <property type="evidence" value="ECO:0000314"/>
    <property type="project" value="SGD"/>
</dbReference>
<dbReference type="GO" id="GO:0016251">
    <property type="term" value="F:RNA polymerase II general transcription initiation factor activity"/>
    <property type="evidence" value="ECO:0000318"/>
    <property type="project" value="GO_Central"/>
</dbReference>
<dbReference type="GO" id="GO:0061629">
    <property type="term" value="F:RNA polymerase II-specific DNA-binding transcription factor binding"/>
    <property type="evidence" value="ECO:0000314"/>
    <property type="project" value="SGD"/>
</dbReference>
<dbReference type="GO" id="GO:0001016">
    <property type="term" value="F:RNA polymerase III transcription regulatory region sequence-specific DNA binding"/>
    <property type="evidence" value="ECO:0000314"/>
    <property type="project" value="SGD"/>
</dbReference>
<dbReference type="GO" id="GO:0001092">
    <property type="term" value="F:TFIIA-class transcription factor complex binding"/>
    <property type="evidence" value="ECO:0000353"/>
    <property type="project" value="CAFA"/>
</dbReference>
<dbReference type="GO" id="GO:0006352">
    <property type="term" value="P:DNA-templated transcription initiation"/>
    <property type="evidence" value="ECO:0000318"/>
    <property type="project" value="GO_Central"/>
</dbReference>
<dbReference type="GO" id="GO:0045892">
    <property type="term" value="P:negative regulation of DNA-templated transcription"/>
    <property type="evidence" value="ECO:0000314"/>
    <property type="project" value="ComplexPortal"/>
</dbReference>
<dbReference type="GO" id="GO:0042790">
    <property type="term" value="P:nucleolar large rRNA transcription by RNA polymerase I"/>
    <property type="evidence" value="ECO:0000315"/>
    <property type="project" value="SGD"/>
</dbReference>
<dbReference type="GO" id="GO:0045944">
    <property type="term" value="P:positive regulation of transcription by RNA polymerase II"/>
    <property type="evidence" value="ECO:0000314"/>
    <property type="project" value="ComplexPortal"/>
</dbReference>
<dbReference type="GO" id="GO:0006359">
    <property type="term" value="P:regulation of transcription by RNA polymerase III"/>
    <property type="evidence" value="ECO:0000314"/>
    <property type="project" value="ComplexPortal"/>
</dbReference>
<dbReference type="GO" id="GO:0001188">
    <property type="term" value="P:RNA polymerase I preinitiation complex assembly"/>
    <property type="evidence" value="ECO:0000315"/>
    <property type="project" value="SGD"/>
</dbReference>
<dbReference type="GO" id="GO:0051123">
    <property type="term" value="P:RNA polymerase II preinitiation complex assembly"/>
    <property type="evidence" value="ECO:0000315"/>
    <property type="project" value="CAFA"/>
</dbReference>
<dbReference type="GO" id="GO:0070898">
    <property type="term" value="P:RNA polymerase III preinitiation complex assembly"/>
    <property type="evidence" value="ECO:0000314"/>
    <property type="project" value="SGD"/>
</dbReference>
<dbReference type="CDD" id="cd04516">
    <property type="entry name" value="TBP_eukaryotes"/>
    <property type="match status" value="1"/>
</dbReference>
<dbReference type="FunFam" id="3.30.310.10:FF:000001">
    <property type="entry name" value="TATA-box-binding protein 2"/>
    <property type="match status" value="1"/>
</dbReference>
<dbReference type="FunFam" id="3.30.310.10:FF:000002">
    <property type="entry name" value="TATA-box-binding protein 2"/>
    <property type="match status" value="1"/>
</dbReference>
<dbReference type="Gene3D" id="3.30.310.10">
    <property type="entry name" value="TATA-Binding Protein"/>
    <property type="match status" value="2"/>
</dbReference>
<dbReference type="HAMAP" id="MF_00408">
    <property type="entry name" value="TATA_bind_prot_arch"/>
    <property type="match status" value="1"/>
</dbReference>
<dbReference type="InterPro" id="IPR000814">
    <property type="entry name" value="TBP"/>
</dbReference>
<dbReference type="InterPro" id="IPR030491">
    <property type="entry name" value="TBP_CS"/>
</dbReference>
<dbReference type="InterPro" id="IPR012295">
    <property type="entry name" value="TBP_dom_sf"/>
</dbReference>
<dbReference type="InterPro" id="IPR033710">
    <property type="entry name" value="TBP_eukaryotic"/>
</dbReference>
<dbReference type="PANTHER" id="PTHR10126">
    <property type="entry name" value="TATA-BOX BINDING PROTEIN"/>
    <property type="match status" value="1"/>
</dbReference>
<dbReference type="Pfam" id="PF00352">
    <property type="entry name" value="TBP"/>
    <property type="match status" value="2"/>
</dbReference>
<dbReference type="PRINTS" id="PR00686">
    <property type="entry name" value="TIFACTORIID"/>
</dbReference>
<dbReference type="SUPFAM" id="SSF55945">
    <property type="entry name" value="TATA-box binding protein-like"/>
    <property type="match status" value="2"/>
</dbReference>
<dbReference type="PROSITE" id="PS00351">
    <property type="entry name" value="TFIID"/>
    <property type="match status" value="2"/>
</dbReference>
<comment type="function">
    <text evidence="2 3 7">General transcription factor that functions at the core of the DNA-binding general transcription factor complex TFIID. Binding of TFIID to a promoter (with or without TATA element) is the initial step in preinitiation complex (PIC) formation. TFIID plays a key role in the regulation of gene expression by RNA polymerase II through different activities such as transcription activator interaction, core promoter recognition and selectivity, TFIIA and TFIIB interaction, chromatin modification (histone acetylation by TAF1), facilitation of DNA opening and initiation of transcription.</text>
</comment>
<comment type="subunit">
    <text evidence="4 5">Binds DNA as monomer. The 1.2 MDa TFIID complex is composed of TATA binding protein (TBP) and the 14 TBP-associated factors. One copy of each TAF1, TAF2, TAF3, TAF7, TAF8, TAF11, TAF13, two copies of each TAF4, TAF5, TAF6, TAF9, TAF10, TAF12, and three copies of TAF14. Interacts with TFC8.</text>
</comment>
<comment type="interaction">
    <interactant intactId="EBI-19129">
        <id>P13393</id>
    </interactant>
    <interactant intactId="EBI-19142">
        <id>P29056</id>
        <label>BRF1</label>
    </interactant>
    <organismsDiffer>false</organismsDiffer>
    <experiments>3</experiments>
</comment>
<comment type="interaction">
    <interactant intactId="EBI-19129">
        <id>P13393</id>
    </interactant>
    <interactant intactId="EBI-11908">
        <id>P40096</id>
        <label>BUR6</label>
    </interactant>
    <organismsDiffer>false</organismsDiffer>
    <experiments>2</experiments>
</comment>
<comment type="interaction">
    <interactant intactId="EBI-19129">
        <id>P13393</id>
    </interactant>
    <interactant intactId="EBI-20932">
        <id>P38304</id>
        <label>MED8</label>
    </interactant>
    <organismsDiffer>false</organismsDiffer>
    <experiments>3</experiments>
</comment>
<comment type="interaction">
    <interactant intactId="EBI-19129">
        <id>P13393</id>
    </interactant>
    <interactant intactId="EBI-11152">
        <id>P32333</id>
        <label>MOT1</label>
    </interactant>
    <organismsDiffer>false</organismsDiffer>
    <experiments>8</experiments>
</comment>
<comment type="interaction">
    <interactant intactId="EBI-19129">
        <id>P13393</id>
    </interactant>
    <interactant intactId="EBI-13914">
        <id>Q01939</id>
        <label>RPT6</label>
    </interactant>
    <organismsDiffer>false</organismsDiffer>
    <experiments>2</experiments>
</comment>
<comment type="interaction">
    <interactant intactId="EBI-19129">
        <id>P13393</id>
    </interactant>
    <interactant intactId="EBI-27790">
        <id>Q04712</id>
        <label>RRN11</label>
    </interactant>
    <organismsDiffer>false</organismsDiffer>
    <experiments>2</experiments>
</comment>
<comment type="interaction">
    <interactant intactId="EBI-19129">
        <id>P13393</id>
    </interactant>
    <interactant intactId="EBI-30712">
        <id>Q03940</id>
        <label>RVB1</label>
    </interactant>
    <organismsDiffer>false</organismsDiffer>
    <experiments>3</experiments>
</comment>
<comment type="interaction">
    <interactant intactId="EBI-19129">
        <id>P13393</id>
    </interactant>
    <interactant intactId="EBI-31814">
        <id>Q12464</id>
        <label>RVB2</label>
    </interactant>
    <organismsDiffer>false</organismsDiffer>
    <experiments>3</experiments>
</comment>
<comment type="interaction">
    <interactant intactId="EBI-19129">
        <id>P13393</id>
    </interactant>
    <interactant intactId="EBI-17964">
        <id>P38915</id>
        <label>SPT8</label>
    </interactant>
    <organismsDiffer>false</organismsDiffer>
    <experiments>3</experiments>
</comment>
<comment type="interaction">
    <interactant intactId="EBI-19129">
        <id>P13393</id>
    </interactant>
    <interactant intactId="EBI-19323">
        <id>P32774</id>
        <label>TOA2</label>
    </interactant>
    <organismsDiffer>false</organismsDiffer>
    <experiments>2</experiments>
</comment>
<comment type="subcellular location">
    <subcellularLocation>
        <location>Nucleus</location>
    </subcellularLocation>
</comment>
<comment type="similarity">
    <text evidence="8">Belongs to the TBP family.</text>
</comment>
<organism>
    <name type="scientific">Saccharomyces cerevisiae (strain ATCC 204508 / S288c)</name>
    <name type="common">Baker's yeast</name>
    <dbReference type="NCBI Taxonomy" id="559292"/>
    <lineage>
        <taxon>Eukaryota</taxon>
        <taxon>Fungi</taxon>
        <taxon>Dikarya</taxon>
        <taxon>Ascomycota</taxon>
        <taxon>Saccharomycotina</taxon>
        <taxon>Saccharomycetes</taxon>
        <taxon>Saccharomycetales</taxon>
        <taxon>Saccharomycetaceae</taxon>
        <taxon>Saccharomyces</taxon>
    </lineage>
</organism>
<sequence length="240" mass="27003">MADEERLKEFKEANKIVFDPNTRQVWENQNRDGTKPATTFQSEEDIKRAAPESEKDTSATSGIVPTLQNIVATVTLGCRLDLKTVALHARNAEYNPKRFAAVIMRIREPKTTALIFASGKMVVTGAKSEDDSKLASRKYARIIQKIGFAAKFTDFKIQNIVGSCDVKFPIRLEGLAFSHGTFSSYEPELFPGLIYRMVKPKIVLLIFVSGKIVLTGAKQREEIYQAFEAIYPVLSEFRKM</sequence>
<proteinExistence type="evidence at protein level"/>
<gene>
    <name type="primary">SPT15</name>
    <name type="synonym">BTF1</name>
    <name type="synonym">TBP1</name>
    <name type="ordered locus">YER148W</name>
</gene>